<reference evidence="4" key="1">
    <citation type="journal article" date="2009" name="BMC Evol. Biol.">
        <title>A proteomic approach for studying insect phylogeny: CAPA peptides of ancient insect taxa (Dictyoptera, Blattoptera) as a test case.</title>
        <authorList>
            <person name="Roth S."/>
            <person name="Fromm B."/>
            <person name="Gaede G."/>
            <person name="Predel R."/>
        </authorList>
    </citation>
    <scope>PROTEIN SEQUENCE</scope>
    <scope>AMIDATION AT VAL-11</scope>
    <source>
        <tissue evidence="2">Abdominal perisympathetic organs</tissue>
    </source>
</reference>
<comment type="function">
    <text evidence="4">Mediates visceral muscle contractile activity (myotropic activity).</text>
</comment>
<comment type="subcellular location">
    <subcellularLocation>
        <location evidence="4">Secreted</location>
    </subcellularLocation>
</comment>
<comment type="similarity">
    <text evidence="1">Belongs to the periviscerokinin family.</text>
</comment>
<sequence>GSSGMIPFPRV</sequence>
<proteinExistence type="evidence at protein level"/>
<dbReference type="GO" id="GO:0005576">
    <property type="term" value="C:extracellular region"/>
    <property type="evidence" value="ECO:0007669"/>
    <property type="project" value="UniProtKB-SubCell"/>
</dbReference>
<dbReference type="GO" id="GO:0007218">
    <property type="term" value="P:neuropeptide signaling pathway"/>
    <property type="evidence" value="ECO:0007669"/>
    <property type="project" value="UniProtKB-KW"/>
</dbReference>
<dbReference type="InterPro" id="IPR013231">
    <property type="entry name" value="Periviscerokinin"/>
</dbReference>
<dbReference type="Pfam" id="PF08259">
    <property type="entry name" value="Periviscerokin"/>
    <property type="match status" value="1"/>
</dbReference>
<feature type="peptide" id="PRO_0000378853" description="Periviscerokinin-3" evidence="2">
    <location>
        <begin position="1"/>
        <end position="11"/>
    </location>
</feature>
<feature type="modified residue" description="Valine amide" evidence="2">
    <location>
        <position position="11"/>
    </location>
</feature>
<protein>
    <recommendedName>
        <fullName evidence="3">Periviscerokinin-3</fullName>
        <shortName evidence="3">PycSu-PVK-3</shortName>
    </recommendedName>
</protein>
<name>PVK3_PYCSU</name>
<accession>P85763</accession>
<organism>
    <name type="scientific">Pycnoscelus surinamensis</name>
    <name type="common">Surinam cockroach</name>
    <name type="synonym">Blatta surinamensis</name>
    <dbReference type="NCBI Taxonomy" id="36961"/>
    <lineage>
        <taxon>Eukaryota</taxon>
        <taxon>Metazoa</taxon>
        <taxon>Ecdysozoa</taxon>
        <taxon>Arthropoda</taxon>
        <taxon>Hexapoda</taxon>
        <taxon>Insecta</taxon>
        <taxon>Pterygota</taxon>
        <taxon>Neoptera</taxon>
        <taxon>Polyneoptera</taxon>
        <taxon>Dictyoptera</taxon>
        <taxon>Blattodea</taxon>
        <taxon>Blaberoidea</taxon>
        <taxon>Blaberidae</taxon>
        <taxon>Pycnoscelinae</taxon>
        <taxon>Pycnoscelus</taxon>
    </lineage>
</organism>
<evidence type="ECO:0000255" key="1"/>
<evidence type="ECO:0000269" key="2">
    <source>
    </source>
</evidence>
<evidence type="ECO:0000303" key="3">
    <source>
    </source>
</evidence>
<evidence type="ECO:0000305" key="4"/>
<keyword id="KW-0027">Amidation</keyword>
<keyword id="KW-0903">Direct protein sequencing</keyword>
<keyword id="KW-0527">Neuropeptide</keyword>
<keyword id="KW-0964">Secreted</keyword>